<reference key="1">
    <citation type="journal article" date="2004" name="Science">
        <title>The Ashbya gossypii genome as a tool for mapping the ancient Saccharomyces cerevisiae genome.</title>
        <authorList>
            <person name="Dietrich F.S."/>
            <person name="Voegeli S."/>
            <person name="Brachat S."/>
            <person name="Lerch A."/>
            <person name="Gates K."/>
            <person name="Steiner S."/>
            <person name="Mohr C."/>
            <person name="Poehlmann R."/>
            <person name="Luedi P."/>
            <person name="Choi S."/>
            <person name="Wing R.A."/>
            <person name="Flavier A."/>
            <person name="Gaffney T.D."/>
            <person name="Philippsen P."/>
        </authorList>
    </citation>
    <scope>NUCLEOTIDE SEQUENCE [LARGE SCALE GENOMIC DNA]</scope>
    <source>
        <strain>ATCC 10895 / CBS 109.51 / FGSC 9923 / NRRL Y-1056</strain>
    </source>
</reference>
<reference key="2">
    <citation type="journal article" date="2013" name="G3 (Bethesda)">
        <title>Genomes of Ashbya fungi isolated from insects reveal four mating-type loci, numerous translocations, lack of transposons, and distinct gene duplications.</title>
        <authorList>
            <person name="Dietrich F.S."/>
            <person name="Voegeli S."/>
            <person name="Kuo S."/>
            <person name="Philippsen P."/>
        </authorList>
    </citation>
    <scope>GENOME REANNOTATION</scope>
    <source>
        <strain>ATCC 10895 / CBS 109.51 / FGSC 9923 / NRRL Y-1056</strain>
    </source>
</reference>
<evidence type="ECO:0000250" key="1"/>
<evidence type="ECO:0000256" key="2">
    <source>
        <dbReference type="SAM" id="MobiDB-lite"/>
    </source>
</evidence>
<evidence type="ECO:0000305" key="3"/>
<organism>
    <name type="scientific">Eremothecium gossypii (strain ATCC 10895 / CBS 109.51 / FGSC 9923 / NRRL Y-1056)</name>
    <name type="common">Yeast</name>
    <name type="synonym">Ashbya gossypii</name>
    <dbReference type="NCBI Taxonomy" id="284811"/>
    <lineage>
        <taxon>Eukaryota</taxon>
        <taxon>Fungi</taxon>
        <taxon>Dikarya</taxon>
        <taxon>Ascomycota</taxon>
        <taxon>Saccharomycotina</taxon>
        <taxon>Saccharomycetes</taxon>
        <taxon>Saccharomycetales</taxon>
        <taxon>Saccharomycetaceae</taxon>
        <taxon>Eremothecium</taxon>
    </lineage>
</organism>
<dbReference type="EC" id="5.2.1.8"/>
<dbReference type="EMBL" id="AE016817">
    <property type="protein sequence ID" value="AAS51964.1"/>
    <property type="molecule type" value="Genomic_DNA"/>
</dbReference>
<dbReference type="RefSeq" id="NP_984140.1">
    <property type="nucleotide sequence ID" value="NM_209493.1"/>
</dbReference>
<dbReference type="SMR" id="Q75A74"/>
<dbReference type="FunCoup" id="Q75A74">
    <property type="interactions" value="1179"/>
</dbReference>
<dbReference type="STRING" id="284811.Q75A74"/>
<dbReference type="EnsemblFungi" id="AAS51964">
    <property type="protein sequence ID" value="AAS51964"/>
    <property type="gene ID" value="AGOS_ADR044C"/>
</dbReference>
<dbReference type="GeneID" id="4620289"/>
<dbReference type="KEGG" id="ago:AGOS_ADR044C"/>
<dbReference type="eggNOG" id="KOG0885">
    <property type="taxonomic scope" value="Eukaryota"/>
</dbReference>
<dbReference type="HOGENOM" id="CLU_012062_14_0_1"/>
<dbReference type="InParanoid" id="Q75A74"/>
<dbReference type="OMA" id="WSSHCPK"/>
<dbReference type="OrthoDB" id="442970at2759"/>
<dbReference type="Proteomes" id="UP000000591">
    <property type="component" value="Chromosome IV"/>
</dbReference>
<dbReference type="GO" id="GO:0071013">
    <property type="term" value="C:catalytic step 2 spliceosome"/>
    <property type="evidence" value="ECO:0000318"/>
    <property type="project" value="GO_Central"/>
</dbReference>
<dbReference type="GO" id="GO:0005737">
    <property type="term" value="C:cytoplasm"/>
    <property type="evidence" value="ECO:0007669"/>
    <property type="project" value="UniProtKB-SubCell"/>
</dbReference>
<dbReference type="GO" id="GO:0003755">
    <property type="term" value="F:peptidyl-prolyl cis-trans isomerase activity"/>
    <property type="evidence" value="ECO:0007669"/>
    <property type="project" value="UniProtKB-KW"/>
</dbReference>
<dbReference type="GO" id="GO:0006397">
    <property type="term" value="P:mRNA processing"/>
    <property type="evidence" value="ECO:0007669"/>
    <property type="project" value="UniProtKB-KW"/>
</dbReference>
<dbReference type="GO" id="GO:0006457">
    <property type="term" value="P:protein folding"/>
    <property type="evidence" value="ECO:0000318"/>
    <property type="project" value="GO_Central"/>
</dbReference>
<dbReference type="GO" id="GO:0008380">
    <property type="term" value="P:RNA splicing"/>
    <property type="evidence" value="ECO:0007669"/>
    <property type="project" value="UniProtKB-KW"/>
</dbReference>
<dbReference type="Gene3D" id="2.40.100.10">
    <property type="entry name" value="Cyclophilin-like"/>
    <property type="match status" value="1"/>
</dbReference>
<dbReference type="InterPro" id="IPR029000">
    <property type="entry name" value="Cyclophilin-like_dom_sf"/>
</dbReference>
<dbReference type="InterPro" id="IPR002130">
    <property type="entry name" value="Cyclophilin-type_PPIase_dom"/>
</dbReference>
<dbReference type="InterPro" id="IPR044666">
    <property type="entry name" value="Cyclophilin_A-like"/>
</dbReference>
<dbReference type="PANTHER" id="PTHR45625">
    <property type="entry name" value="PEPTIDYL-PROLYL CIS-TRANS ISOMERASE-RELATED"/>
    <property type="match status" value="1"/>
</dbReference>
<dbReference type="PANTHER" id="PTHR45625:SF6">
    <property type="entry name" value="SPLICEOSOME-ASSOCIATED PROTEIN CWC27 HOMOLOG"/>
    <property type="match status" value="1"/>
</dbReference>
<dbReference type="Pfam" id="PF00160">
    <property type="entry name" value="Pro_isomerase"/>
    <property type="match status" value="1"/>
</dbReference>
<dbReference type="SUPFAM" id="SSF50891">
    <property type="entry name" value="Cyclophilin-like"/>
    <property type="match status" value="1"/>
</dbReference>
<gene>
    <name type="primary">CWC27</name>
    <name type="ordered locus">ADR044C</name>
</gene>
<feature type="chain" id="PRO_0000064180" description="Peptidyl-prolyl isomerase CWC27">
    <location>
        <begin position="1"/>
        <end position="303"/>
    </location>
</feature>
<feature type="domain" description="PPIase cyclophilin-type">
    <location>
        <begin position="7"/>
        <end position="153"/>
    </location>
</feature>
<feature type="region of interest" description="Disordered" evidence="2">
    <location>
        <begin position="155"/>
        <end position="195"/>
    </location>
</feature>
<feature type="region of interest" description="Disordered" evidence="2">
    <location>
        <begin position="208"/>
        <end position="274"/>
    </location>
</feature>
<comment type="function">
    <text evidence="1">PPIases accelerate the folding of proteins. It catalyzes the cis-trans isomerization of proline imidic peptide bonds in oligopeptides. Involved in pre-mRNA splicing (By similarity).</text>
</comment>
<comment type="catalytic activity">
    <reaction>
        <text>[protein]-peptidylproline (omega=180) = [protein]-peptidylproline (omega=0)</text>
        <dbReference type="Rhea" id="RHEA:16237"/>
        <dbReference type="Rhea" id="RHEA-COMP:10747"/>
        <dbReference type="Rhea" id="RHEA-COMP:10748"/>
        <dbReference type="ChEBI" id="CHEBI:83833"/>
        <dbReference type="ChEBI" id="CHEBI:83834"/>
        <dbReference type="EC" id="5.2.1.8"/>
    </reaction>
</comment>
<comment type="subunit">
    <text evidence="1">Associated with the spliceosome.</text>
</comment>
<comment type="subcellular location">
    <subcellularLocation>
        <location evidence="1">Cytoplasm</location>
    </subcellularLocation>
    <subcellularLocation>
        <location evidence="1">Nucleus</location>
    </subcellularLocation>
</comment>
<comment type="similarity">
    <text evidence="3">Belongs to the cyclophilin-type PPIase family. CWC27 subfamily.</text>
</comment>
<keyword id="KW-0963">Cytoplasm</keyword>
<keyword id="KW-0413">Isomerase</keyword>
<keyword id="KW-0507">mRNA processing</keyword>
<keyword id="KW-0508">mRNA splicing</keyword>
<keyword id="KW-0539">Nucleus</keyword>
<keyword id="KW-1185">Reference proteome</keyword>
<keyword id="KW-0697">Rotamase</keyword>
<keyword id="KW-0747">Spliceosome</keyword>
<sequence length="303" mass="32485">MSSEPSASGKCVLYTTKGELQIELWAKECPKTVRSFLQSIQDGKWDGIVLGKVAEDAVWAPAGLCACSAEINGRLRFNRRGLVGMAPGQDQPFFTLASRGELDGRAVVFGTLVGQSVYRLMEIAQGEVGDDGKTFVYPAEVRRAEVTIPYFDGLSGQKRRAEPEQQAAPRPRKIATRVRLEYEESEDEASDPPLDVRIRAAHDILQDERLTDALHGDSPPPRPAEAPRGSDSAPCVASPDRRAEAAPPTDGPPSRCASLAGPAPASPGPVTDLAPQLSAREQGTLSSLAEFRCKRGGKNPLLG</sequence>
<accession>Q75A74</accession>
<proteinExistence type="inferred from homology"/>
<protein>
    <recommendedName>
        <fullName>Peptidyl-prolyl isomerase CWC27</fullName>
        <shortName>PPIase CWC27</shortName>
        <ecNumber>5.2.1.8</ecNumber>
    </recommendedName>
    <alternativeName>
        <fullName>Rotamase CWC27</fullName>
    </alternativeName>
</protein>
<name>CWC27_EREGS</name>